<protein>
    <recommendedName>
        <fullName evidence="4">Arginine transport ATP-binding protein ArgV</fullName>
        <ecNumber evidence="5">7.4.2.1</ecNumber>
    </recommendedName>
</protein>
<dbReference type="EC" id="7.4.2.1" evidence="5"/>
<dbReference type="EMBL" id="BA000036">
    <property type="protein sequence ID" value="BAB98723.1"/>
    <property type="status" value="ALT_INIT"/>
    <property type="molecule type" value="Genomic_DNA"/>
</dbReference>
<dbReference type="EMBL" id="BX927152">
    <property type="protein sequence ID" value="CAF21338.1"/>
    <property type="molecule type" value="Genomic_DNA"/>
</dbReference>
<dbReference type="RefSeq" id="NP_600550.1">
    <property type="nucleotide sequence ID" value="NC_003450.3"/>
</dbReference>
<dbReference type="RefSeq" id="WP_003858826.1">
    <property type="nucleotide sequence ID" value="NC_006958.1"/>
</dbReference>
<dbReference type="SMR" id="Q8NQU4"/>
<dbReference type="STRING" id="196627.cg1502"/>
<dbReference type="KEGG" id="cgb:cg1502"/>
<dbReference type="KEGG" id="cgl:Cgl1330"/>
<dbReference type="PATRIC" id="fig|196627.13.peg.1300"/>
<dbReference type="eggNOG" id="COG1126">
    <property type="taxonomic scope" value="Bacteria"/>
</dbReference>
<dbReference type="HOGENOM" id="CLU_000604_1_22_11"/>
<dbReference type="OrthoDB" id="4398079at2"/>
<dbReference type="BioCyc" id="CORYNE:G18NG-10908-MONOMER"/>
<dbReference type="Proteomes" id="UP000000582">
    <property type="component" value="Chromosome"/>
</dbReference>
<dbReference type="Proteomes" id="UP000001009">
    <property type="component" value="Chromosome"/>
</dbReference>
<dbReference type="GO" id="GO:0005886">
    <property type="term" value="C:plasma membrane"/>
    <property type="evidence" value="ECO:0007669"/>
    <property type="project" value="UniProtKB-SubCell"/>
</dbReference>
<dbReference type="GO" id="GO:0015424">
    <property type="term" value="F:ABC-type amino acid transporter activity"/>
    <property type="evidence" value="ECO:0007669"/>
    <property type="project" value="InterPro"/>
</dbReference>
<dbReference type="GO" id="GO:0005524">
    <property type="term" value="F:ATP binding"/>
    <property type="evidence" value="ECO:0007669"/>
    <property type="project" value="UniProtKB-KW"/>
</dbReference>
<dbReference type="GO" id="GO:0016887">
    <property type="term" value="F:ATP hydrolysis activity"/>
    <property type="evidence" value="ECO:0007669"/>
    <property type="project" value="InterPro"/>
</dbReference>
<dbReference type="CDD" id="cd03262">
    <property type="entry name" value="ABC_HisP_GlnQ"/>
    <property type="match status" value="1"/>
</dbReference>
<dbReference type="FunFam" id="3.40.50.300:FF:000020">
    <property type="entry name" value="Amino acid ABC transporter ATP-binding component"/>
    <property type="match status" value="1"/>
</dbReference>
<dbReference type="Gene3D" id="3.40.50.300">
    <property type="entry name" value="P-loop containing nucleotide triphosphate hydrolases"/>
    <property type="match status" value="1"/>
</dbReference>
<dbReference type="InterPro" id="IPR003593">
    <property type="entry name" value="AAA+_ATPase"/>
</dbReference>
<dbReference type="InterPro" id="IPR030679">
    <property type="entry name" value="ABC_ATPase_HisP-typ"/>
</dbReference>
<dbReference type="InterPro" id="IPR003439">
    <property type="entry name" value="ABC_transporter-like_ATP-bd"/>
</dbReference>
<dbReference type="InterPro" id="IPR017871">
    <property type="entry name" value="ABC_transporter-like_CS"/>
</dbReference>
<dbReference type="InterPro" id="IPR050086">
    <property type="entry name" value="MetN_ABC_transporter-like"/>
</dbReference>
<dbReference type="InterPro" id="IPR027417">
    <property type="entry name" value="P-loop_NTPase"/>
</dbReference>
<dbReference type="PANTHER" id="PTHR43166">
    <property type="entry name" value="AMINO ACID IMPORT ATP-BINDING PROTEIN"/>
    <property type="match status" value="1"/>
</dbReference>
<dbReference type="PANTHER" id="PTHR43166:SF9">
    <property type="entry name" value="GLUTAMATE_ASPARTATE IMPORT ATP-BINDING PROTEIN GLTL"/>
    <property type="match status" value="1"/>
</dbReference>
<dbReference type="Pfam" id="PF00005">
    <property type="entry name" value="ABC_tran"/>
    <property type="match status" value="1"/>
</dbReference>
<dbReference type="PIRSF" id="PIRSF039085">
    <property type="entry name" value="ABC_ATPase_HisP"/>
    <property type="match status" value="1"/>
</dbReference>
<dbReference type="SMART" id="SM00382">
    <property type="entry name" value="AAA"/>
    <property type="match status" value="1"/>
</dbReference>
<dbReference type="SUPFAM" id="SSF52540">
    <property type="entry name" value="P-loop containing nucleoside triphosphate hydrolases"/>
    <property type="match status" value="1"/>
</dbReference>
<dbReference type="PROSITE" id="PS00211">
    <property type="entry name" value="ABC_TRANSPORTER_1"/>
    <property type="match status" value="1"/>
</dbReference>
<dbReference type="PROSITE" id="PS50893">
    <property type="entry name" value="ABC_TRANSPORTER_2"/>
    <property type="match status" value="1"/>
</dbReference>
<organism>
    <name type="scientific">Corynebacterium glutamicum (strain ATCC 13032 / DSM 20300 / JCM 1318 / BCRC 11384 / CCUG 27702 / LMG 3730 / NBRC 12168 / NCIMB 10025 / NRRL B-2784 / 534)</name>
    <dbReference type="NCBI Taxonomy" id="196627"/>
    <lineage>
        <taxon>Bacteria</taxon>
        <taxon>Bacillati</taxon>
        <taxon>Actinomycetota</taxon>
        <taxon>Actinomycetes</taxon>
        <taxon>Mycobacteriales</taxon>
        <taxon>Corynebacteriaceae</taxon>
        <taxon>Corynebacterium</taxon>
    </lineage>
</organism>
<accession>Q8NQU4</accession>
<comment type="function">
    <text evidence="2 4">Part of the ABC transporter complex ArgTUV involved in L-arginine import (PubMed:37061714). May also transport L-citrulline (PubMed:37061714). Probably responsible for energy coupling to the transport system (Probable).</text>
</comment>
<comment type="catalytic activity">
    <reaction evidence="5">
        <text>a polar amino acid(out) + ATP + H2O = a polar amino acid(in) + ADP + phosphate + H(+)</text>
        <dbReference type="Rhea" id="RHEA:14673"/>
        <dbReference type="ChEBI" id="CHEBI:15377"/>
        <dbReference type="ChEBI" id="CHEBI:15378"/>
        <dbReference type="ChEBI" id="CHEBI:30616"/>
        <dbReference type="ChEBI" id="CHEBI:43474"/>
        <dbReference type="ChEBI" id="CHEBI:62031"/>
        <dbReference type="ChEBI" id="CHEBI:456216"/>
        <dbReference type="EC" id="7.4.2.1"/>
    </reaction>
    <physiologicalReaction direction="left-to-right" evidence="5">
        <dbReference type="Rhea" id="RHEA:14674"/>
    </physiologicalReaction>
</comment>
<comment type="catalytic activity">
    <reaction evidence="5">
        <text>L-arginine(out) + ATP + H2O = L-arginine(in) + ADP + phosphate + H(+)</text>
        <dbReference type="Rhea" id="RHEA:29879"/>
        <dbReference type="ChEBI" id="CHEBI:15377"/>
        <dbReference type="ChEBI" id="CHEBI:15378"/>
        <dbReference type="ChEBI" id="CHEBI:30616"/>
        <dbReference type="ChEBI" id="CHEBI:32682"/>
        <dbReference type="ChEBI" id="CHEBI:43474"/>
        <dbReference type="ChEBI" id="CHEBI:456216"/>
        <dbReference type="EC" id="7.4.2.1"/>
    </reaction>
    <physiologicalReaction direction="left-to-right" evidence="5">
        <dbReference type="Rhea" id="RHEA:29880"/>
    </physiologicalReaction>
</comment>
<comment type="subunit">
    <text evidence="5">The complex is probably composed of two ATP-binding proteins (ArgV), two transmembrane proteins (ArgU) and a solute-binding protein (ArgT).</text>
</comment>
<comment type="subcellular location">
    <subcellularLocation>
        <location evidence="4">Cell membrane</location>
        <topology evidence="4">Peripheral membrane protein</topology>
    </subcellularLocation>
</comment>
<comment type="disruption phenotype">
    <text evidence="2">Deletion of argTUV in an L-arginine producer strain results in a faster and 24% higher L-arginine production in comparison to the parental strain.</text>
</comment>
<comment type="similarity">
    <text evidence="4">Belongs to the ABC transporter superfamily.</text>
</comment>
<comment type="sequence caution" evidence="4">
    <conflict type="erroneous initiation">
        <sequence resource="EMBL-CDS" id="BAB98723"/>
    </conflict>
    <text>Truncated N-terminus.</text>
</comment>
<evidence type="ECO:0000255" key="1">
    <source>
        <dbReference type="PROSITE-ProRule" id="PRU00434"/>
    </source>
</evidence>
<evidence type="ECO:0000269" key="2">
    <source>
    </source>
</evidence>
<evidence type="ECO:0000303" key="3">
    <source>
    </source>
</evidence>
<evidence type="ECO:0000305" key="4"/>
<evidence type="ECO:0000305" key="5">
    <source>
    </source>
</evidence>
<evidence type="ECO:0000312" key="6">
    <source>
        <dbReference type="EMBL" id="BAB98723.1"/>
    </source>
</evidence>
<evidence type="ECO:0000312" key="7">
    <source>
        <dbReference type="EMBL" id="CAF21338.1"/>
    </source>
</evidence>
<name>ARGV_CORGL</name>
<keyword id="KW-0029">Amino-acid transport</keyword>
<keyword id="KW-0067">ATP-binding</keyword>
<keyword id="KW-1003">Cell membrane</keyword>
<keyword id="KW-0472">Membrane</keyword>
<keyword id="KW-0547">Nucleotide-binding</keyword>
<keyword id="KW-1185">Reference proteome</keyword>
<keyword id="KW-1278">Translocase</keyword>
<keyword id="KW-0813">Transport</keyword>
<reference key="1">
    <citation type="journal article" date="2003" name="Appl. Microbiol. Biotechnol.">
        <title>The Corynebacterium glutamicum genome: features and impacts on biotechnological processes.</title>
        <authorList>
            <person name="Ikeda M."/>
            <person name="Nakagawa S."/>
        </authorList>
    </citation>
    <scope>NUCLEOTIDE SEQUENCE [LARGE SCALE GENOMIC DNA]</scope>
    <source>
        <strain>ATCC 13032 / DSM 20300 / JCM 1318 / BCRC 11384 / CCUG 27702 / LMG 3730 / NBRC 12168 / NCIMB 10025 / NRRL B-2784 / 534</strain>
    </source>
</reference>
<reference key="2">
    <citation type="journal article" date="2003" name="J. Biotechnol.">
        <title>The complete Corynebacterium glutamicum ATCC 13032 genome sequence and its impact on the production of L-aspartate-derived amino acids and vitamins.</title>
        <authorList>
            <person name="Kalinowski J."/>
            <person name="Bathe B."/>
            <person name="Bartels D."/>
            <person name="Bischoff N."/>
            <person name="Bott M."/>
            <person name="Burkovski A."/>
            <person name="Dusch N."/>
            <person name="Eggeling L."/>
            <person name="Eikmanns B.J."/>
            <person name="Gaigalat L."/>
            <person name="Goesmann A."/>
            <person name="Hartmann M."/>
            <person name="Huthmacher K."/>
            <person name="Kraemer R."/>
            <person name="Linke B."/>
            <person name="McHardy A.C."/>
            <person name="Meyer F."/>
            <person name="Moeckel B."/>
            <person name="Pfefferle W."/>
            <person name="Puehler A."/>
            <person name="Rey D.A."/>
            <person name="Rueckert C."/>
            <person name="Rupp O."/>
            <person name="Sahm H."/>
            <person name="Wendisch V.F."/>
            <person name="Wiegraebe I."/>
            <person name="Tauch A."/>
        </authorList>
    </citation>
    <scope>NUCLEOTIDE SEQUENCE [LARGE SCALE GENOMIC DNA]</scope>
    <source>
        <strain>ATCC 13032 / DSM 20300 / JCM 1318 / BCRC 11384 / CCUG 27702 / LMG 3730 / NBRC 12168 / NCIMB 10025 / NRRL B-2784 / 534</strain>
    </source>
</reference>
<reference key="3">
    <citation type="journal article" date="2023" name="Microb. Cell Fact.">
        <title>Discovery of novel amino acid production traits by evolution of synthetic co-cultures.</title>
        <authorList>
            <person name="Zuchowski R."/>
            <person name="Schito S."/>
            <person name="Neuheuser F."/>
            <person name="Menke P."/>
            <person name="Berger D."/>
            <person name="Hollmann N."/>
            <person name="Gujar S."/>
            <person name="Sundermeyer L."/>
            <person name="Mack C."/>
            <person name="Wirtz A."/>
            <person name="Weiergraeber O.H."/>
            <person name="Polen T."/>
            <person name="Bott M."/>
            <person name="Noack S."/>
            <person name="Baumgart M."/>
        </authorList>
    </citation>
    <scope>FUNCTION IN ARGININE IMPORT</scope>
    <scope>DISRUPTION PHENOTYPE</scope>
    <source>
        <strain>ATCC 13032 / DSM 20300 / JCM 1318 / BCRC 11384 / CCUG 27702 / LMG 3730 / NBRC 12168 / NCIMB 10025 / NRRL B-2784 / 534</strain>
    </source>
</reference>
<gene>
    <name evidence="3" type="primary">argV</name>
    <name evidence="6" type="ordered locus">Cgl1330</name>
    <name evidence="7" type="ordered locus">cg1502</name>
</gene>
<feature type="chain" id="PRO_0000459379" description="Arginine transport ATP-binding protein ArgV">
    <location>
        <begin position="1"/>
        <end position="254"/>
    </location>
</feature>
<feature type="domain" description="ABC transporter" evidence="1">
    <location>
        <begin position="6"/>
        <end position="250"/>
    </location>
</feature>
<feature type="binding site" evidence="1">
    <location>
        <begin position="38"/>
        <end position="45"/>
    </location>
    <ligand>
        <name>ATP</name>
        <dbReference type="ChEBI" id="CHEBI:30616"/>
    </ligand>
</feature>
<proteinExistence type="evidence at protein level"/>
<sequence>MSQLMIDAQQVCKNYGRLEVLKGIDLQVPKGTVTCLIGPSGSGKSTMLRCVNHLEKVNAGRLYVDGDLIGYRERDGVLYEISEKDAAKQRSDIGMVFQNFNLFPHRTVIENIIEAPIHVKKQPESKARARAMELLEQVGLAHKADAYPVQLSGGQQQRVAIARAVAMEPKLMLFDEPTSALDPELVGEVLRVMKQLADDGMTMLVVTHEMGFAHEVADQVVFMADGVVVEAGTPEQVLDNPKEQRTKDFLSSLL</sequence>